<proteinExistence type="inferred from homology"/>
<reference key="1">
    <citation type="journal article" date="2006" name="PLoS Biol.">
        <title>The genome of deep-sea vent chemolithoautotroph Thiomicrospira crunogena XCL-2.</title>
        <authorList>
            <person name="Scott K.M."/>
            <person name="Sievert S.M."/>
            <person name="Abril F.N."/>
            <person name="Ball L.A."/>
            <person name="Barrett C.J."/>
            <person name="Blake R.A."/>
            <person name="Boller A.J."/>
            <person name="Chain P.S.G."/>
            <person name="Clark J.A."/>
            <person name="Davis C.R."/>
            <person name="Detter C."/>
            <person name="Do K.F."/>
            <person name="Dobrinski K.P."/>
            <person name="Faza B.I."/>
            <person name="Fitzpatrick K.A."/>
            <person name="Freyermuth S.K."/>
            <person name="Harmer T.L."/>
            <person name="Hauser L.J."/>
            <person name="Huegler M."/>
            <person name="Kerfeld C.A."/>
            <person name="Klotz M.G."/>
            <person name="Kong W.W."/>
            <person name="Land M."/>
            <person name="Lapidus A."/>
            <person name="Larimer F.W."/>
            <person name="Longo D.L."/>
            <person name="Lucas S."/>
            <person name="Malfatti S.A."/>
            <person name="Massey S.E."/>
            <person name="Martin D.D."/>
            <person name="McCuddin Z."/>
            <person name="Meyer F."/>
            <person name="Moore J.L."/>
            <person name="Ocampo L.H. Jr."/>
            <person name="Paul J.H."/>
            <person name="Paulsen I.T."/>
            <person name="Reep D.K."/>
            <person name="Ren Q."/>
            <person name="Ross R.L."/>
            <person name="Sato P.Y."/>
            <person name="Thomas P."/>
            <person name="Tinkham L.E."/>
            <person name="Zeruth G.T."/>
        </authorList>
    </citation>
    <scope>NUCLEOTIDE SEQUENCE [LARGE SCALE GENOMIC DNA]</scope>
    <source>
        <strain>DSM 25203 / XCL-2</strain>
    </source>
</reference>
<protein>
    <recommendedName>
        <fullName evidence="1">CTP synthase</fullName>
        <ecNumber evidence="1">6.3.4.2</ecNumber>
    </recommendedName>
    <alternativeName>
        <fullName evidence="1">Cytidine 5'-triphosphate synthase</fullName>
    </alternativeName>
    <alternativeName>
        <fullName evidence="1">Cytidine triphosphate synthetase</fullName>
        <shortName evidence="1">CTP synthetase</shortName>
        <shortName evidence="1">CTPS</shortName>
    </alternativeName>
    <alternativeName>
        <fullName evidence="1">UTP--ammonia ligase</fullName>
    </alternativeName>
</protein>
<dbReference type="EC" id="6.3.4.2" evidence="1"/>
<dbReference type="EMBL" id="CP000109">
    <property type="protein sequence ID" value="ABB41857.1"/>
    <property type="molecule type" value="Genomic_DNA"/>
</dbReference>
<dbReference type="SMR" id="Q31G66"/>
<dbReference type="STRING" id="317025.Tcr_1262"/>
<dbReference type="KEGG" id="tcx:Tcr_1262"/>
<dbReference type="eggNOG" id="COG0504">
    <property type="taxonomic scope" value="Bacteria"/>
</dbReference>
<dbReference type="HOGENOM" id="CLU_011675_5_0_6"/>
<dbReference type="OrthoDB" id="9801107at2"/>
<dbReference type="UniPathway" id="UPA00159">
    <property type="reaction ID" value="UER00277"/>
</dbReference>
<dbReference type="GO" id="GO:0005829">
    <property type="term" value="C:cytosol"/>
    <property type="evidence" value="ECO:0007669"/>
    <property type="project" value="TreeGrafter"/>
</dbReference>
<dbReference type="GO" id="GO:0005524">
    <property type="term" value="F:ATP binding"/>
    <property type="evidence" value="ECO:0007669"/>
    <property type="project" value="UniProtKB-KW"/>
</dbReference>
<dbReference type="GO" id="GO:0003883">
    <property type="term" value="F:CTP synthase activity"/>
    <property type="evidence" value="ECO:0007669"/>
    <property type="project" value="UniProtKB-UniRule"/>
</dbReference>
<dbReference type="GO" id="GO:0004359">
    <property type="term" value="F:glutaminase activity"/>
    <property type="evidence" value="ECO:0007669"/>
    <property type="project" value="RHEA"/>
</dbReference>
<dbReference type="GO" id="GO:0042802">
    <property type="term" value="F:identical protein binding"/>
    <property type="evidence" value="ECO:0007669"/>
    <property type="project" value="TreeGrafter"/>
</dbReference>
<dbReference type="GO" id="GO:0046872">
    <property type="term" value="F:metal ion binding"/>
    <property type="evidence" value="ECO:0007669"/>
    <property type="project" value="UniProtKB-KW"/>
</dbReference>
<dbReference type="GO" id="GO:0044210">
    <property type="term" value="P:'de novo' CTP biosynthetic process"/>
    <property type="evidence" value="ECO:0007669"/>
    <property type="project" value="UniProtKB-UniRule"/>
</dbReference>
<dbReference type="GO" id="GO:0019856">
    <property type="term" value="P:pyrimidine nucleobase biosynthetic process"/>
    <property type="evidence" value="ECO:0007669"/>
    <property type="project" value="TreeGrafter"/>
</dbReference>
<dbReference type="CDD" id="cd03113">
    <property type="entry name" value="CTPS_N"/>
    <property type="match status" value="1"/>
</dbReference>
<dbReference type="CDD" id="cd01746">
    <property type="entry name" value="GATase1_CTP_Synthase"/>
    <property type="match status" value="1"/>
</dbReference>
<dbReference type="FunFam" id="3.40.50.300:FF:000009">
    <property type="entry name" value="CTP synthase"/>
    <property type="match status" value="1"/>
</dbReference>
<dbReference type="FunFam" id="3.40.50.880:FF:000002">
    <property type="entry name" value="CTP synthase"/>
    <property type="match status" value="1"/>
</dbReference>
<dbReference type="Gene3D" id="3.40.50.880">
    <property type="match status" value="1"/>
</dbReference>
<dbReference type="Gene3D" id="3.40.50.300">
    <property type="entry name" value="P-loop containing nucleotide triphosphate hydrolases"/>
    <property type="match status" value="1"/>
</dbReference>
<dbReference type="HAMAP" id="MF_01227">
    <property type="entry name" value="PyrG"/>
    <property type="match status" value="1"/>
</dbReference>
<dbReference type="InterPro" id="IPR029062">
    <property type="entry name" value="Class_I_gatase-like"/>
</dbReference>
<dbReference type="InterPro" id="IPR004468">
    <property type="entry name" value="CTP_synthase"/>
</dbReference>
<dbReference type="InterPro" id="IPR017456">
    <property type="entry name" value="CTP_synthase_N"/>
</dbReference>
<dbReference type="InterPro" id="IPR017926">
    <property type="entry name" value="GATASE"/>
</dbReference>
<dbReference type="InterPro" id="IPR033828">
    <property type="entry name" value="GATase1_CTP_Synthase"/>
</dbReference>
<dbReference type="InterPro" id="IPR027417">
    <property type="entry name" value="P-loop_NTPase"/>
</dbReference>
<dbReference type="NCBIfam" id="NF003792">
    <property type="entry name" value="PRK05380.1"/>
    <property type="match status" value="1"/>
</dbReference>
<dbReference type="NCBIfam" id="TIGR00337">
    <property type="entry name" value="PyrG"/>
    <property type="match status" value="1"/>
</dbReference>
<dbReference type="PANTHER" id="PTHR11550">
    <property type="entry name" value="CTP SYNTHASE"/>
    <property type="match status" value="1"/>
</dbReference>
<dbReference type="PANTHER" id="PTHR11550:SF0">
    <property type="entry name" value="CTP SYNTHASE-RELATED"/>
    <property type="match status" value="1"/>
</dbReference>
<dbReference type="Pfam" id="PF06418">
    <property type="entry name" value="CTP_synth_N"/>
    <property type="match status" value="1"/>
</dbReference>
<dbReference type="Pfam" id="PF00117">
    <property type="entry name" value="GATase"/>
    <property type="match status" value="1"/>
</dbReference>
<dbReference type="SUPFAM" id="SSF52317">
    <property type="entry name" value="Class I glutamine amidotransferase-like"/>
    <property type="match status" value="1"/>
</dbReference>
<dbReference type="SUPFAM" id="SSF52540">
    <property type="entry name" value="P-loop containing nucleoside triphosphate hydrolases"/>
    <property type="match status" value="1"/>
</dbReference>
<dbReference type="PROSITE" id="PS51273">
    <property type="entry name" value="GATASE_TYPE_1"/>
    <property type="match status" value="1"/>
</dbReference>
<feature type="chain" id="PRO_0000266253" description="CTP synthase">
    <location>
        <begin position="1"/>
        <end position="543"/>
    </location>
</feature>
<feature type="domain" description="Glutamine amidotransferase type-1" evidence="1">
    <location>
        <begin position="290"/>
        <end position="541"/>
    </location>
</feature>
<feature type="region of interest" description="Amidoligase domain" evidence="1">
    <location>
        <begin position="1"/>
        <end position="265"/>
    </location>
</feature>
<feature type="active site" description="Nucleophile; for glutamine hydrolysis" evidence="1">
    <location>
        <position position="378"/>
    </location>
</feature>
<feature type="active site" evidence="1">
    <location>
        <position position="514"/>
    </location>
</feature>
<feature type="active site" evidence="1">
    <location>
        <position position="516"/>
    </location>
</feature>
<feature type="binding site" evidence="1">
    <location>
        <position position="13"/>
    </location>
    <ligand>
        <name>CTP</name>
        <dbReference type="ChEBI" id="CHEBI:37563"/>
        <note>allosteric inhibitor</note>
    </ligand>
</feature>
<feature type="binding site" evidence="1">
    <location>
        <position position="13"/>
    </location>
    <ligand>
        <name>UTP</name>
        <dbReference type="ChEBI" id="CHEBI:46398"/>
    </ligand>
</feature>
<feature type="binding site" evidence="1">
    <location>
        <begin position="14"/>
        <end position="19"/>
    </location>
    <ligand>
        <name>ATP</name>
        <dbReference type="ChEBI" id="CHEBI:30616"/>
    </ligand>
</feature>
<feature type="binding site" evidence="1">
    <location>
        <position position="71"/>
    </location>
    <ligand>
        <name>ATP</name>
        <dbReference type="ChEBI" id="CHEBI:30616"/>
    </ligand>
</feature>
<feature type="binding site" evidence="1">
    <location>
        <position position="71"/>
    </location>
    <ligand>
        <name>Mg(2+)</name>
        <dbReference type="ChEBI" id="CHEBI:18420"/>
    </ligand>
</feature>
<feature type="binding site" evidence="1">
    <location>
        <position position="139"/>
    </location>
    <ligand>
        <name>Mg(2+)</name>
        <dbReference type="ChEBI" id="CHEBI:18420"/>
    </ligand>
</feature>
<feature type="binding site" evidence="1">
    <location>
        <begin position="146"/>
        <end position="148"/>
    </location>
    <ligand>
        <name>CTP</name>
        <dbReference type="ChEBI" id="CHEBI:37563"/>
        <note>allosteric inhibitor</note>
    </ligand>
</feature>
<feature type="binding site" evidence="1">
    <location>
        <begin position="186"/>
        <end position="191"/>
    </location>
    <ligand>
        <name>CTP</name>
        <dbReference type="ChEBI" id="CHEBI:37563"/>
        <note>allosteric inhibitor</note>
    </ligand>
</feature>
<feature type="binding site" evidence="1">
    <location>
        <begin position="186"/>
        <end position="191"/>
    </location>
    <ligand>
        <name>UTP</name>
        <dbReference type="ChEBI" id="CHEBI:46398"/>
    </ligand>
</feature>
<feature type="binding site" evidence="1">
    <location>
        <position position="222"/>
    </location>
    <ligand>
        <name>CTP</name>
        <dbReference type="ChEBI" id="CHEBI:37563"/>
        <note>allosteric inhibitor</note>
    </ligand>
</feature>
<feature type="binding site" evidence="1">
    <location>
        <position position="222"/>
    </location>
    <ligand>
        <name>UTP</name>
        <dbReference type="ChEBI" id="CHEBI:46398"/>
    </ligand>
</feature>
<feature type="binding site" evidence="1">
    <location>
        <position position="351"/>
    </location>
    <ligand>
        <name>L-glutamine</name>
        <dbReference type="ChEBI" id="CHEBI:58359"/>
    </ligand>
</feature>
<feature type="binding site" evidence="1">
    <location>
        <begin position="379"/>
        <end position="382"/>
    </location>
    <ligand>
        <name>L-glutamine</name>
        <dbReference type="ChEBI" id="CHEBI:58359"/>
    </ligand>
</feature>
<feature type="binding site" evidence="1">
    <location>
        <position position="402"/>
    </location>
    <ligand>
        <name>L-glutamine</name>
        <dbReference type="ChEBI" id="CHEBI:58359"/>
    </ligand>
</feature>
<feature type="binding site" evidence="1">
    <location>
        <position position="469"/>
    </location>
    <ligand>
        <name>L-glutamine</name>
        <dbReference type="ChEBI" id="CHEBI:58359"/>
    </ligand>
</feature>
<evidence type="ECO:0000255" key="1">
    <source>
        <dbReference type="HAMAP-Rule" id="MF_01227"/>
    </source>
</evidence>
<sequence>MTKFIFVTGGVVSSLGKGIAAASLGSLLEARGLKVSMLKMDPYINVDPGTMSPLQHGEVFVTDDGAETDLDLGHYERFVQRNFTKRNSFSTGQVYEKVIRNERRGDYLGGTVQVIPHITDEIKHRIKLAAAGADVALVEVGGTVGDIESLPFLEAIRQLGVEVGRDRAMFMHLTLLPYIAVAGEVKTKPTQHSVKELRSIGIQPDILICRSERPLEESEKRKIALFTNVEEKAVINSLDARTIYEVPRMLHEQGLDRLVTDRFRIDAPVADLSDWDDVVQAQLNPEKSVEIAMVGKYVDLTEAYKSLIEALIHGGIQTKTQVNIHYIDSEDLEKDGIGSIEKMDAILVPGGFGERGVEGKIAAIQFARENNVPYLGICLGMQMAVVEFARHVAGLPSAHSTELDPKTKTPVVALITEWTDENGQLVERDEKADLGGTMRLGGQSCALVEGSKMRDIYGEDVIRERHRHRYEVNDGYIAKLEAAGLKISGRSEDGNLVETVEIEDHPWFVACQFHPEFTSTPRNGHPLFKAFVEAASQHKQTTH</sequence>
<gene>
    <name evidence="1" type="primary">pyrG</name>
    <name type="ordered locus">Tcr_1262</name>
</gene>
<name>PYRG_HYDCU</name>
<accession>Q31G66</accession>
<organism>
    <name type="scientific">Hydrogenovibrio crunogenus (strain DSM 25203 / XCL-2)</name>
    <name type="common">Thiomicrospira crunogena</name>
    <dbReference type="NCBI Taxonomy" id="317025"/>
    <lineage>
        <taxon>Bacteria</taxon>
        <taxon>Pseudomonadati</taxon>
        <taxon>Pseudomonadota</taxon>
        <taxon>Gammaproteobacteria</taxon>
        <taxon>Thiotrichales</taxon>
        <taxon>Piscirickettsiaceae</taxon>
        <taxon>Hydrogenovibrio</taxon>
    </lineage>
</organism>
<keyword id="KW-0067">ATP-binding</keyword>
<keyword id="KW-0315">Glutamine amidotransferase</keyword>
<keyword id="KW-0436">Ligase</keyword>
<keyword id="KW-0460">Magnesium</keyword>
<keyword id="KW-0479">Metal-binding</keyword>
<keyword id="KW-0547">Nucleotide-binding</keyword>
<keyword id="KW-0665">Pyrimidine biosynthesis</keyword>
<comment type="function">
    <text evidence="1">Catalyzes the ATP-dependent amination of UTP to CTP with either L-glutamine or ammonia as the source of nitrogen. Regulates intracellular CTP levels through interactions with the four ribonucleotide triphosphates.</text>
</comment>
<comment type="catalytic activity">
    <reaction evidence="1">
        <text>UTP + L-glutamine + ATP + H2O = CTP + L-glutamate + ADP + phosphate + 2 H(+)</text>
        <dbReference type="Rhea" id="RHEA:26426"/>
        <dbReference type="ChEBI" id="CHEBI:15377"/>
        <dbReference type="ChEBI" id="CHEBI:15378"/>
        <dbReference type="ChEBI" id="CHEBI:29985"/>
        <dbReference type="ChEBI" id="CHEBI:30616"/>
        <dbReference type="ChEBI" id="CHEBI:37563"/>
        <dbReference type="ChEBI" id="CHEBI:43474"/>
        <dbReference type="ChEBI" id="CHEBI:46398"/>
        <dbReference type="ChEBI" id="CHEBI:58359"/>
        <dbReference type="ChEBI" id="CHEBI:456216"/>
        <dbReference type="EC" id="6.3.4.2"/>
    </reaction>
</comment>
<comment type="catalytic activity">
    <reaction evidence="1">
        <text>L-glutamine + H2O = L-glutamate + NH4(+)</text>
        <dbReference type="Rhea" id="RHEA:15889"/>
        <dbReference type="ChEBI" id="CHEBI:15377"/>
        <dbReference type="ChEBI" id="CHEBI:28938"/>
        <dbReference type="ChEBI" id="CHEBI:29985"/>
        <dbReference type="ChEBI" id="CHEBI:58359"/>
    </reaction>
</comment>
<comment type="catalytic activity">
    <reaction evidence="1">
        <text>UTP + NH4(+) + ATP = CTP + ADP + phosphate + 2 H(+)</text>
        <dbReference type="Rhea" id="RHEA:16597"/>
        <dbReference type="ChEBI" id="CHEBI:15378"/>
        <dbReference type="ChEBI" id="CHEBI:28938"/>
        <dbReference type="ChEBI" id="CHEBI:30616"/>
        <dbReference type="ChEBI" id="CHEBI:37563"/>
        <dbReference type="ChEBI" id="CHEBI:43474"/>
        <dbReference type="ChEBI" id="CHEBI:46398"/>
        <dbReference type="ChEBI" id="CHEBI:456216"/>
    </reaction>
</comment>
<comment type="activity regulation">
    <text evidence="1">Allosterically activated by GTP, when glutamine is the substrate; GTP has no effect on the reaction when ammonia is the substrate. The allosteric effector GTP functions by stabilizing the protein conformation that binds the tetrahedral intermediate(s) formed during glutamine hydrolysis. Inhibited by the product CTP, via allosteric rather than competitive inhibition.</text>
</comment>
<comment type="pathway">
    <text evidence="1">Pyrimidine metabolism; CTP biosynthesis via de novo pathway; CTP from UDP: step 2/2.</text>
</comment>
<comment type="subunit">
    <text evidence="1">Homotetramer.</text>
</comment>
<comment type="miscellaneous">
    <text evidence="1">CTPSs have evolved a hybrid strategy for distinguishing between UTP and CTP. The overlapping regions of the product feedback inhibitory and substrate sites recognize a common feature in both compounds, the triphosphate moiety. To differentiate isosteric substrate and product pyrimidine rings, an additional pocket far from the expected kinase/ligase catalytic site, specifically recognizes the cytosine and ribose portions of the product inhibitor.</text>
</comment>
<comment type="similarity">
    <text evidence="1">Belongs to the CTP synthase family.</text>
</comment>